<sequence>MTSLSRPRVEFISTILQTVLNLGLLCLGLILVVFLGKETVHLADVLFAPEQTSKYELVEGLVVYFLYFEFIALIVKYFQSGFHFPLRYFVYIGITAIVRLIIVDHKSPLDVLIYSAAILLLVITLWLCNSKRLKRE</sequence>
<keyword id="KW-0997">Cell inner membrane</keyword>
<keyword id="KW-1003">Cell membrane</keyword>
<keyword id="KW-0472">Membrane</keyword>
<keyword id="KW-0812">Transmembrane</keyword>
<keyword id="KW-1133">Transmembrane helix</keyword>
<feature type="chain" id="PRO_1000149615" description="Protein PsiE">
    <location>
        <begin position="1"/>
        <end position="136"/>
    </location>
</feature>
<feature type="transmembrane region" description="Helical" evidence="1">
    <location>
        <begin position="15"/>
        <end position="35"/>
    </location>
</feature>
<feature type="transmembrane region" description="Helical" evidence="1">
    <location>
        <begin position="55"/>
        <end position="75"/>
    </location>
</feature>
<feature type="transmembrane region" description="Helical" evidence="1">
    <location>
        <begin position="82"/>
        <end position="102"/>
    </location>
</feature>
<feature type="transmembrane region" description="Helical" evidence="1">
    <location>
        <begin position="108"/>
        <end position="128"/>
    </location>
</feature>
<dbReference type="EMBL" id="CU928162">
    <property type="protein sequence ID" value="CAR10708.1"/>
    <property type="molecule type" value="Genomic_DNA"/>
</dbReference>
<dbReference type="RefSeq" id="WP_000202902.1">
    <property type="nucleotide sequence ID" value="NC_011745.1"/>
</dbReference>
<dbReference type="SMR" id="B7N2N9"/>
<dbReference type="GeneID" id="93777857"/>
<dbReference type="KEGG" id="ecq:ECED1_4747"/>
<dbReference type="HOGENOM" id="CLU_127561_0_1_6"/>
<dbReference type="Proteomes" id="UP000000748">
    <property type="component" value="Chromosome"/>
</dbReference>
<dbReference type="GO" id="GO:0005886">
    <property type="term" value="C:plasma membrane"/>
    <property type="evidence" value="ECO:0007669"/>
    <property type="project" value="UniProtKB-SubCell"/>
</dbReference>
<dbReference type="GO" id="GO:0016036">
    <property type="term" value="P:cellular response to phosphate starvation"/>
    <property type="evidence" value="ECO:0007669"/>
    <property type="project" value="InterPro"/>
</dbReference>
<dbReference type="HAMAP" id="MF_01048">
    <property type="entry name" value="PsiE"/>
    <property type="match status" value="1"/>
</dbReference>
<dbReference type="InterPro" id="IPR009315">
    <property type="entry name" value="P_starv_induced_PsiE"/>
</dbReference>
<dbReference type="InterPro" id="IPR020948">
    <property type="entry name" value="P_starv_induced_PsiE-like"/>
</dbReference>
<dbReference type="NCBIfam" id="NF002764">
    <property type="entry name" value="PRK02833.1-2"/>
    <property type="match status" value="1"/>
</dbReference>
<dbReference type="NCBIfam" id="NF002765">
    <property type="entry name" value="PRK02833.1-3"/>
    <property type="match status" value="1"/>
</dbReference>
<dbReference type="NCBIfam" id="NF002767">
    <property type="entry name" value="PRK02833.1-5"/>
    <property type="match status" value="1"/>
</dbReference>
<dbReference type="PANTHER" id="PTHR37819">
    <property type="entry name" value="PROTEIN PSIE"/>
    <property type="match status" value="1"/>
</dbReference>
<dbReference type="PANTHER" id="PTHR37819:SF1">
    <property type="entry name" value="PROTEIN PSIE"/>
    <property type="match status" value="1"/>
</dbReference>
<dbReference type="Pfam" id="PF06146">
    <property type="entry name" value="PsiE"/>
    <property type="match status" value="1"/>
</dbReference>
<dbReference type="PIRSF" id="PIRSF029598">
    <property type="entry name" value="PsiE"/>
    <property type="match status" value="1"/>
</dbReference>
<protein>
    <recommendedName>
        <fullName evidence="1">Protein PsiE</fullName>
    </recommendedName>
</protein>
<reference key="1">
    <citation type="journal article" date="2009" name="PLoS Genet.">
        <title>Organised genome dynamics in the Escherichia coli species results in highly diverse adaptive paths.</title>
        <authorList>
            <person name="Touchon M."/>
            <person name="Hoede C."/>
            <person name="Tenaillon O."/>
            <person name="Barbe V."/>
            <person name="Baeriswyl S."/>
            <person name="Bidet P."/>
            <person name="Bingen E."/>
            <person name="Bonacorsi S."/>
            <person name="Bouchier C."/>
            <person name="Bouvet O."/>
            <person name="Calteau A."/>
            <person name="Chiapello H."/>
            <person name="Clermont O."/>
            <person name="Cruveiller S."/>
            <person name="Danchin A."/>
            <person name="Diard M."/>
            <person name="Dossat C."/>
            <person name="Karoui M.E."/>
            <person name="Frapy E."/>
            <person name="Garry L."/>
            <person name="Ghigo J.M."/>
            <person name="Gilles A.M."/>
            <person name="Johnson J."/>
            <person name="Le Bouguenec C."/>
            <person name="Lescat M."/>
            <person name="Mangenot S."/>
            <person name="Martinez-Jehanne V."/>
            <person name="Matic I."/>
            <person name="Nassif X."/>
            <person name="Oztas S."/>
            <person name="Petit M.A."/>
            <person name="Pichon C."/>
            <person name="Rouy Z."/>
            <person name="Ruf C.S."/>
            <person name="Schneider D."/>
            <person name="Tourret J."/>
            <person name="Vacherie B."/>
            <person name="Vallenet D."/>
            <person name="Medigue C."/>
            <person name="Rocha E.P.C."/>
            <person name="Denamur E."/>
        </authorList>
    </citation>
    <scope>NUCLEOTIDE SEQUENCE [LARGE SCALE GENOMIC DNA]</scope>
    <source>
        <strain>ED1a</strain>
    </source>
</reference>
<comment type="subcellular location">
    <subcellularLocation>
        <location evidence="1">Cell inner membrane</location>
        <topology evidence="1">Multi-pass membrane protein</topology>
    </subcellularLocation>
</comment>
<comment type="similarity">
    <text evidence="1">Belongs to the PsiE family.</text>
</comment>
<name>PSIE_ECO81</name>
<gene>
    <name evidence="1" type="primary">psiE</name>
    <name type="ordered locus">ECED1_4747</name>
</gene>
<evidence type="ECO:0000255" key="1">
    <source>
        <dbReference type="HAMAP-Rule" id="MF_01048"/>
    </source>
</evidence>
<proteinExistence type="inferred from homology"/>
<organism>
    <name type="scientific">Escherichia coli O81 (strain ED1a)</name>
    <dbReference type="NCBI Taxonomy" id="585397"/>
    <lineage>
        <taxon>Bacteria</taxon>
        <taxon>Pseudomonadati</taxon>
        <taxon>Pseudomonadota</taxon>
        <taxon>Gammaproteobacteria</taxon>
        <taxon>Enterobacterales</taxon>
        <taxon>Enterobacteriaceae</taxon>
        <taxon>Escherichia</taxon>
    </lineage>
</organism>
<accession>B7N2N9</accession>